<keyword id="KW-0963">Cytoplasm</keyword>
<keyword id="KW-0251">Elongation factor</keyword>
<keyword id="KW-0342">GTP-binding</keyword>
<keyword id="KW-0547">Nucleotide-binding</keyword>
<keyword id="KW-0648">Protein biosynthesis</keyword>
<keyword id="KW-1185">Reference proteome</keyword>
<reference key="1">
    <citation type="journal article" date="2008" name="J. Bacteriol.">
        <title>The genome of Heliobacterium modesticaldum, a phototrophic representative of the Firmicutes containing the simplest photosynthetic apparatus.</title>
        <authorList>
            <person name="Sattley W.M."/>
            <person name="Madigan M.T."/>
            <person name="Swingley W.D."/>
            <person name="Cheung P.C."/>
            <person name="Clocksin K.M."/>
            <person name="Conrad A.L."/>
            <person name="Dejesa L.C."/>
            <person name="Honchak B.M."/>
            <person name="Jung D.O."/>
            <person name="Karbach L.E."/>
            <person name="Kurdoglu A."/>
            <person name="Lahiri S."/>
            <person name="Mastrian S.D."/>
            <person name="Page L.E."/>
            <person name="Taylor H.L."/>
            <person name="Wang Z.T."/>
            <person name="Raymond J."/>
            <person name="Chen M."/>
            <person name="Blankenship R.E."/>
            <person name="Touchman J.W."/>
        </authorList>
    </citation>
    <scope>NUCLEOTIDE SEQUENCE [LARGE SCALE GENOMIC DNA]</scope>
    <source>
        <strain>ATCC 51547 / Ice1</strain>
    </source>
</reference>
<feature type="chain" id="PRO_1000091718" description="Elongation factor G">
    <location>
        <begin position="1"/>
        <end position="691"/>
    </location>
</feature>
<feature type="domain" description="tr-type G">
    <location>
        <begin position="8"/>
        <end position="282"/>
    </location>
</feature>
<feature type="binding site" evidence="1">
    <location>
        <begin position="17"/>
        <end position="24"/>
    </location>
    <ligand>
        <name>GTP</name>
        <dbReference type="ChEBI" id="CHEBI:37565"/>
    </ligand>
</feature>
<feature type="binding site" evidence="1">
    <location>
        <begin position="81"/>
        <end position="85"/>
    </location>
    <ligand>
        <name>GTP</name>
        <dbReference type="ChEBI" id="CHEBI:37565"/>
    </ligand>
</feature>
<feature type="binding site" evidence="1">
    <location>
        <begin position="135"/>
        <end position="138"/>
    </location>
    <ligand>
        <name>GTP</name>
        <dbReference type="ChEBI" id="CHEBI:37565"/>
    </ligand>
</feature>
<evidence type="ECO:0000255" key="1">
    <source>
        <dbReference type="HAMAP-Rule" id="MF_00054"/>
    </source>
</evidence>
<name>EFG_HELMI</name>
<protein>
    <recommendedName>
        <fullName evidence="1">Elongation factor G</fullName>
        <shortName evidence="1">EF-G</shortName>
    </recommendedName>
</protein>
<proteinExistence type="inferred from homology"/>
<dbReference type="EMBL" id="CP000930">
    <property type="protein sequence ID" value="ABZ83952.1"/>
    <property type="molecule type" value="Genomic_DNA"/>
</dbReference>
<dbReference type="RefSeq" id="WP_012282468.1">
    <property type="nucleotide sequence ID" value="NC_010337.2"/>
</dbReference>
<dbReference type="SMR" id="B0TC53"/>
<dbReference type="STRING" id="498761.HM1_1375"/>
<dbReference type="KEGG" id="hmo:HM1_1375"/>
<dbReference type="eggNOG" id="COG0480">
    <property type="taxonomic scope" value="Bacteria"/>
</dbReference>
<dbReference type="HOGENOM" id="CLU_002794_4_1_9"/>
<dbReference type="OrthoDB" id="9804431at2"/>
<dbReference type="Proteomes" id="UP000008550">
    <property type="component" value="Chromosome"/>
</dbReference>
<dbReference type="GO" id="GO:0005737">
    <property type="term" value="C:cytoplasm"/>
    <property type="evidence" value="ECO:0007669"/>
    <property type="project" value="UniProtKB-SubCell"/>
</dbReference>
<dbReference type="GO" id="GO:0005525">
    <property type="term" value="F:GTP binding"/>
    <property type="evidence" value="ECO:0007669"/>
    <property type="project" value="UniProtKB-UniRule"/>
</dbReference>
<dbReference type="GO" id="GO:0003924">
    <property type="term" value="F:GTPase activity"/>
    <property type="evidence" value="ECO:0007669"/>
    <property type="project" value="InterPro"/>
</dbReference>
<dbReference type="GO" id="GO:0003746">
    <property type="term" value="F:translation elongation factor activity"/>
    <property type="evidence" value="ECO:0007669"/>
    <property type="project" value="UniProtKB-UniRule"/>
</dbReference>
<dbReference type="GO" id="GO:0032790">
    <property type="term" value="P:ribosome disassembly"/>
    <property type="evidence" value="ECO:0007669"/>
    <property type="project" value="TreeGrafter"/>
</dbReference>
<dbReference type="CDD" id="cd01886">
    <property type="entry name" value="EF-G"/>
    <property type="match status" value="1"/>
</dbReference>
<dbReference type="CDD" id="cd16262">
    <property type="entry name" value="EFG_III"/>
    <property type="match status" value="1"/>
</dbReference>
<dbReference type="CDD" id="cd01434">
    <property type="entry name" value="EFG_mtEFG1_IV"/>
    <property type="match status" value="1"/>
</dbReference>
<dbReference type="CDD" id="cd03713">
    <property type="entry name" value="EFG_mtEFG_C"/>
    <property type="match status" value="1"/>
</dbReference>
<dbReference type="CDD" id="cd04088">
    <property type="entry name" value="EFG_mtEFG_II"/>
    <property type="match status" value="1"/>
</dbReference>
<dbReference type="FunFam" id="2.40.30.10:FF:000006">
    <property type="entry name" value="Elongation factor G"/>
    <property type="match status" value="1"/>
</dbReference>
<dbReference type="FunFam" id="3.30.230.10:FF:000003">
    <property type="entry name" value="Elongation factor G"/>
    <property type="match status" value="1"/>
</dbReference>
<dbReference type="FunFam" id="3.30.70.240:FF:000001">
    <property type="entry name" value="Elongation factor G"/>
    <property type="match status" value="1"/>
</dbReference>
<dbReference type="FunFam" id="3.30.70.870:FF:000001">
    <property type="entry name" value="Elongation factor G"/>
    <property type="match status" value="1"/>
</dbReference>
<dbReference type="FunFam" id="3.40.50.300:FF:000029">
    <property type="entry name" value="Elongation factor G"/>
    <property type="match status" value="1"/>
</dbReference>
<dbReference type="Gene3D" id="3.30.230.10">
    <property type="match status" value="1"/>
</dbReference>
<dbReference type="Gene3D" id="3.30.70.240">
    <property type="match status" value="1"/>
</dbReference>
<dbReference type="Gene3D" id="3.30.70.870">
    <property type="entry name" value="Elongation Factor G (Translational Gtpase), domain 3"/>
    <property type="match status" value="1"/>
</dbReference>
<dbReference type="Gene3D" id="3.40.50.300">
    <property type="entry name" value="P-loop containing nucleotide triphosphate hydrolases"/>
    <property type="match status" value="1"/>
</dbReference>
<dbReference type="Gene3D" id="2.40.30.10">
    <property type="entry name" value="Translation factors"/>
    <property type="match status" value="1"/>
</dbReference>
<dbReference type="HAMAP" id="MF_00054_B">
    <property type="entry name" value="EF_G_EF_2_B"/>
    <property type="match status" value="1"/>
</dbReference>
<dbReference type="InterPro" id="IPR041095">
    <property type="entry name" value="EFG_II"/>
</dbReference>
<dbReference type="InterPro" id="IPR009022">
    <property type="entry name" value="EFG_III"/>
</dbReference>
<dbReference type="InterPro" id="IPR035647">
    <property type="entry name" value="EFG_III/V"/>
</dbReference>
<dbReference type="InterPro" id="IPR047872">
    <property type="entry name" value="EFG_IV"/>
</dbReference>
<dbReference type="InterPro" id="IPR035649">
    <property type="entry name" value="EFG_V"/>
</dbReference>
<dbReference type="InterPro" id="IPR000640">
    <property type="entry name" value="EFG_V-like"/>
</dbReference>
<dbReference type="InterPro" id="IPR004161">
    <property type="entry name" value="EFTu-like_2"/>
</dbReference>
<dbReference type="InterPro" id="IPR031157">
    <property type="entry name" value="G_TR_CS"/>
</dbReference>
<dbReference type="InterPro" id="IPR027417">
    <property type="entry name" value="P-loop_NTPase"/>
</dbReference>
<dbReference type="InterPro" id="IPR020568">
    <property type="entry name" value="Ribosomal_Su5_D2-typ_SF"/>
</dbReference>
<dbReference type="InterPro" id="IPR014721">
    <property type="entry name" value="Ribsml_uS5_D2-typ_fold_subgr"/>
</dbReference>
<dbReference type="InterPro" id="IPR005225">
    <property type="entry name" value="Small_GTP-bd"/>
</dbReference>
<dbReference type="InterPro" id="IPR000795">
    <property type="entry name" value="T_Tr_GTP-bd_dom"/>
</dbReference>
<dbReference type="InterPro" id="IPR009000">
    <property type="entry name" value="Transl_B-barrel_sf"/>
</dbReference>
<dbReference type="InterPro" id="IPR004540">
    <property type="entry name" value="Transl_elong_EFG/EF2"/>
</dbReference>
<dbReference type="InterPro" id="IPR005517">
    <property type="entry name" value="Transl_elong_EFG/EF2_IV"/>
</dbReference>
<dbReference type="NCBIfam" id="TIGR00484">
    <property type="entry name" value="EF-G"/>
    <property type="match status" value="1"/>
</dbReference>
<dbReference type="NCBIfam" id="NF009379">
    <property type="entry name" value="PRK12740.1-3"/>
    <property type="match status" value="1"/>
</dbReference>
<dbReference type="NCBIfam" id="NF009381">
    <property type="entry name" value="PRK12740.1-5"/>
    <property type="match status" value="1"/>
</dbReference>
<dbReference type="NCBIfam" id="TIGR00231">
    <property type="entry name" value="small_GTP"/>
    <property type="match status" value="1"/>
</dbReference>
<dbReference type="PANTHER" id="PTHR43261:SF1">
    <property type="entry name" value="RIBOSOME-RELEASING FACTOR 2, MITOCHONDRIAL"/>
    <property type="match status" value="1"/>
</dbReference>
<dbReference type="PANTHER" id="PTHR43261">
    <property type="entry name" value="TRANSLATION ELONGATION FACTOR G-RELATED"/>
    <property type="match status" value="1"/>
</dbReference>
<dbReference type="Pfam" id="PF00679">
    <property type="entry name" value="EFG_C"/>
    <property type="match status" value="1"/>
</dbReference>
<dbReference type="Pfam" id="PF14492">
    <property type="entry name" value="EFG_III"/>
    <property type="match status" value="1"/>
</dbReference>
<dbReference type="Pfam" id="PF03764">
    <property type="entry name" value="EFG_IV"/>
    <property type="match status" value="1"/>
</dbReference>
<dbReference type="Pfam" id="PF00009">
    <property type="entry name" value="GTP_EFTU"/>
    <property type="match status" value="1"/>
</dbReference>
<dbReference type="Pfam" id="PF03144">
    <property type="entry name" value="GTP_EFTU_D2"/>
    <property type="match status" value="1"/>
</dbReference>
<dbReference type="PRINTS" id="PR00315">
    <property type="entry name" value="ELONGATNFCT"/>
</dbReference>
<dbReference type="SMART" id="SM00838">
    <property type="entry name" value="EFG_C"/>
    <property type="match status" value="1"/>
</dbReference>
<dbReference type="SMART" id="SM00889">
    <property type="entry name" value="EFG_IV"/>
    <property type="match status" value="1"/>
</dbReference>
<dbReference type="SUPFAM" id="SSF54980">
    <property type="entry name" value="EF-G C-terminal domain-like"/>
    <property type="match status" value="2"/>
</dbReference>
<dbReference type="SUPFAM" id="SSF52540">
    <property type="entry name" value="P-loop containing nucleoside triphosphate hydrolases"/>
    <property type="match status" value="1"/>
</dbReference>
<dbReference type="SUPFAM" id="SSF54211">
    <property type="entry name" value="Ribosomal protein S5 domain 2-like"/>
    <property type="match status" value="1"/>
</dbReference>
<dbReference type="SUPFAM" id="SSF50447">
    <property type="entry name" value="Translation proteins"/>
    <property type="match status" value="1"/>
</dbReference>
<dbReference type="PROSITE" id="PS00301">
    <property type="entry name" value="G_TR_1"/>
    <property type="match status" value="1"/>
</dbReference>
<dbReference type="PROSITE" id="PS51722">
    <property type="entry name" value="G_TR_2"/>
    <property type="match status" value="1"/>
</dbReference>
<comment type="function">
    <text evidence="1">Catalyzes the GTP-dependent ribosomal translocation step during translation elongation. During this step, the ribosome changes from the pre-translocational (PRE) to the post-translocational (POST) state as the newly formed A-site-bound peptidyl-tRNA and P-site-bound deacylated tRNA move to the P and E sites, respectively. Catalyzes the coordinated movement of the two tRNA molecules, the mRNA and conformational changes in the ribosome.</text>
</comment>
<comment type="subcellular location">
    <subcellularLocation>
        <location evidence="1">Cytoplasm</location>
    </subcellularLocation>
</comment>
<comment type="similarity">
    <text evidence="1">Belongs to the TRAFAC class translation factor GTPase superfamily. Classic translation factor GTPase family. EF-G/EF-2 subfamily.</text>
</comment>
<accession>B0TC53</accession>
<organism>
    <name type="scientific">Heliobacterium modesticaldum (strain ATCC 51547 / Ice1)</name>
    <dbReference type="NCBI Taxonomy" id="498761"/>
    <lineage>
        <taxon>Bacteria</taxon>
        <taxon>Bacillati</taxon>
        <taxon>Bacillota</taxon>
        <taxon>Clostridia</taxon>
        <taxon>Eubacteriales</taxon>
        <taxon>Heliobacteriaceae</taxon>
        <taxon>Heliomicrobium</taxon>
    </lineage>
</organism>
<sequence length="691" mass="76492">MPRQFPLNKTRNIGIMAHIDAGKTTTTERILFYTGRVHKIGEVHDGAATMDWMVQEQERGITITSAATTCQWRGHRINIIDTPGHVDFTVEVERSLRVLDGAVAVFCSVGGVEPQSETVWRQADKYGVPRIAYINKMDRIGADFFRGVSMIRERLGANPVPIQIPIGAEDQFKGIVDLITMKAIIYVDDLGKTSDVTEIPEDLADIAAEYREKLLEAVAESDEELMMKYLEGEELTEEEIRNGIRKSTLAVKMIPVLCGSSFKNKGVQPLLDAVVEFLPAPVDIPAVKGVNPDSGEEDVREVSDEEPFSTLAFKIMADPYVGKLAFFRVYSGKLSSGSYVYNSTKGKKERIGRILQMHANHREEIAEVYTGDIAAAVGLKDTTTGDTLCDEKHPIILESMQFPEPVIHVAIEPKTKADQDKMAIALQRLSEEDPTFRMSTDHETGQTIISGMGELHLEIIVDRMMREFKVEANVGRPQVAYKETIRSKAKAEGKFVRQSGGRGQYGHAVIEIEPLEPGAGYEFVNKIVGGVIPREYIPAIDNGIREAAETGVLAGYPTVDFRVTLVFGSYHDVDSSEMAFKIAGSMAFKEGAAKANPVILEPVMKVEVTVPEEYMGDVIGDINSRRGRIEGMESRGSTQVVRGYVPLSEMFGYATDLRSRTQGRGQYVMMYSHNEEVPRNIAEGIIAKRKG</sequence>
<gene>
    <name evidence="1" type="primary">fusA</name>
    <name type="ordered locus">Helmi_13270</name>
    <name type="ORF">HM1_1375</name>
</gene>